<accession>Q0I513</accession>
<reference key="1">
    <citation type="journal article" date="2007" name="J. Bacteriol.">
        <title>Complete genome sequence of Haemophilus somnus (Histophilus somni) strain 129Pt and comparison to Haemophilus ducreyi 35000HP and Haemophilus influenzae Rd.</title>
        <authorList>
            <person name="Challacombe J.F."/>
            <person name="Duncan A.J."/>
            <person name="Brettin T.S."/>
            <person name="Bruce D."/>
            <person name="Chertkov O."/>
            <person name="Detter J.C."/>
            <person name="Han C.S."/>
            <person name="Misra M."/>
            <person name="Richardson P."/>
            <person name="Tapia R."/>
            <person name="Thayer N."/>
            <person name="Xie G."/>
            <person name="Inzana T.J."/>
        </authorList>
    </citation>
    <scope>NUCLEOTIDE SEQUENCE [LARGE SCALE GENOMIC DNA]</scope>
    <source>
        <strain>129Pt</strain>
    </source>
</reference>
<evidence type="ECO:0000255" key="1">
    <source>
        <dbReference type="HAMAP-Rule" id="MF_01616"/>
    </source>
</evidence>
<name>MLTC_HISS1</name>
<comment type="function">
    <text evidence="1">Murein-degrading enzyme. May play a role in recycling of muropeptides during cell elongation and/or cell division.</text>
</comment>
<comment type="catalytic activity">
    <reaction evidence="1">
        <text>Exolytic cleavage of the (1-&gt;4)-beta-glycosidic linkage between N-acetylmuramic acid (MurNAc) and N-acetylglucosamine (GlcNAc) residues in peptidoglycan, from either the reducing or the non-reducing ends of the peptidoglycan chains, with concomitant formation of a 1,6-anhydrobond in the MurNAc residue.</text>
        <dbReference type="EC" id="4.2.2.n1"/>
    </reaction>
</comment>
<comment type="subcellular location">
    <subcellularLocation>
        <location evidence="1">Cell outer membrane</location>
        <topology evidence="1">Lipid-anchor</topology>
    </subcellularLocation>
</comment>
<comment type="similarity">
    <text evidence="1">Belongs to the transglycosylase Slt family.</text>
</comment>
<proteinExistence type="inferred from homology"/>
<sequence>MKKYIVFAIIPFLFACSSSTLNDDYDEAFAKDTQGLDILTGQFSHNIDQIWGVNELLVASRKDYVKYTDNFYTRSHISFDEGSIMIETLGDKSRLYHSIIHTLLMGADAKGIDLFTSGDVPISSRPFLVGLVVDHKGKQVKNIATASNFANYLLQNKLQTRYLTNGNPVQYVIIPMVANHVAVRAQRYLPLIRKAAGRYGIDESLILGIMQTESSFNPYAISYANAIGLMQVVPHTAGRDVFRLKGLNGQPSKKYLFNPAKNIDTGVAYLTLLRDKYLDGITNPTSKRFAMISAYNSGAGAVLRVFHNDRDIAINKINRLYPEQVYRILTTMHPSEQARNYLLKVDKAQKSYRVIKNSESDLP</sequence>
<protein>
    <recommendedName>
        <fullName evidence="1">Membrane-bound lytic murein transglycosylase C</fullName>
        <ecNumber evidence="1">4.2.2.n1</ecNumber>
    </recommendedName>
    <alternativeName>
        <fullName evidence="1">Murein lyase C</fullName>
    </alternativeName>
</protein>
<feature type="signal peptide" evidence="1">
    <location>
        <begin position="1"/>
        <end position="15"/>
    </location>
</feature>
<feature type="chain" id="PRO_1000069478" description="Membrane-bound lytic murein transglycosylase C">
    <location>
        <begin position="16"/>
        <end position="363"/>
    </location>
</feature>
<feature type="lipid moiety-binding region" description="N-palmitoyl cysteine" evidence="1">
    <location>
        <position position="16"/>
    </location>
</feature>
<feature type="lipid moiety-binding region" description="S-diacylglycerol cysteine" evidence="1">
    <location>
        <position position="16"/>
    </location>
</feature>
<gene>
    <name evidence="1" type="primary">mltC</name>
    <name type="ordered locus">HS_1669</name>
</gene>
<organism>
    <name type="scientific">Histophilus somni (strain 129Pt)</name>
    <name type="common">Haemophilus somnus</name>
    <dbReference type="NCBI Taxonomy" id="205914"/>
    <lineage>
        <taxon>Bacteria</taxon>
        <taxon>Pseudomonadati</taxon>
        <taxon>Pseudomonadota</taxon>
        <taxon>Gammaproteobacteria</taxon>
        <taxon>Pasteurellales</taxon>
        <taxon>Pasteurellaceae</taxon>
        <taxon>Histophilus</taxon>
    </lineage>
</organism>
<dbReference type="EC" id="4.2.2.n1" evidence="1"/>
<dbReference type="EMBL" id="CP000436">
    <property type="protein sequence ID" value="ABI25937.1"/>
    <property type="molecule type" value="Genomic_DNA"/>
</dbReference>
<dbReference type="SMR" id="Q0I513"/>
<dbReference type="CAZy" id="GH23">
    <property type="family name" value="Glycoside Hydrolase Family 23"/>
</dbReference>
<dbReference type="KEGG" id="hso:HS_1669"/>
<dbReference type="eggNOG" id="COG0741">
    <property type="taxonomic scope" value="Bacteria"/>
</dbReference>
<dbReference type="HOGENOM" id="CLU_044583_0_0_6"/>
<dbReference type="GO" id="GO:0009279">
    <property type="term" value="C:cell outer membrane"/>
    <property type="evidence" value="ECO:0007669"/>
    <property type="project" value="UniProtKB-SubCell"/>
</dbReference>
<dbReference type="GO" id="GO:0016798">
    <property type="term" value="F:hydrolase activity, acting on glycosyl bonds"/>
    <property type="evidence" value="ECO:0007669"/>
    <property type="project" value="InterPro"/>
</dbReference>
<dbReference type="GO" id="GO:0008933">
    <property type="term" value="F:peptidoglycan lytic transglycosylase activity"/>
    <property type="evidence" value="ECO:0007669"/>
    <property type="project" value="UniProtKB-UniRule"/>
</dbReference>
<dbReference type="GO" id="GO:0016998">
    <property type="term" value="P:cell wall macromolecule catabolic process"/>
    <property type="evidence" value="ECO:0007669"/>
    <property type="project" value="UniProtKB-UniRule"/>
</dbReference>
<dbReference type="GO" id="GO:0071555">
    <property type="term" value="P:cell wall organization"/>
    <property type="evidence" value="ECO:0007669"/>
    <property type="project" value="UniProtKB-KW"/>
</dbReference>
<dbReference type="GO" id="GO:0000270">
    <property type="term" value="P:peptidoglycan metabolic process"/>
    <property type="evidence" value="ECO:0007669"/>
    <property type="project" value="InterPro"/>
</dbReference>
<dbReference type="CDD" id="cd16893">
    <property type="entry name" value="LT_MltC_MltE"/>
    <property type="match status" value="1"/>
</dbReference>
<dbReference type="Gene3D" id="1.10.530.10">
    <property type="match status" value="1"/>
</dbReference>
<dbReference type="HAMAP" id="MF_01616">
    <property type="entry name" value="MltC"/>
    <property type="match status" value="1"/>
</dbReference>
<dbReference type="InterPro" id="IPR023346">
    <property type="entry name" value="Lysozyme-like_dom_sf"/>
</dbReference>
<dbReference type="InterPro" id="IPR023664">
    <property type="entry name" value="Murein_transglycosylaseC"/>
</dbReference>
<dbReference type="InterPro" id="IPR024570">
    <property type="entry name" value="Murein_transglycosylaseC_N"/>
</dbReference>
<dbReference type="InterPro" id="IPR000189">
    <property type="entry name" value="Transglyc_AS"/>
</dbReference>
<dbReference type="InterPro" id="IPR008258">
    <property type="entry name" value="Transglycosylase_SLT_dom_1"/>
</dbReference>
<dbReference type="NCBIfam" id="NF008670">
    <property type="entry name" value="PRK11671.1"/>
    <property type="match status" value="1"/>
</dbReference>
<dbReference type="PANTHER" id="PTHR37423:SF2">
    <property type="entry name" value="MEMBRANE-BOUND LYTIC MUREIN TRANSGLYCOSYLASE C"/>
    <property type="match status" value="1"/>
</dbReference>
<dbReference type="PANTHER" id="PTHR37423">
    <property type="entry name" value="SOLUBLE LYTIC MUREIN TRANSGLYCOSYLASE-RELATED"/>
    <property type="match status" value="1"/>
</dbReference>
<dbReference type="Pfam" id="PF11873">
    <property type="entry name" value="Mltc_N"/>
    <property type="match status" value="1"/>
</dbReference>
<dbReference type="Pfam" id="PF01464">
    <property type="entry name" value="SLT"/>
    <property type="match status" value="1"/>
</dbReference>
<dbReference type="SUPFAM" id="SSF53955">
    <property type="entry name" value="Lysozyme-like"/>
    <property type="match status" value="1"/>
</dbReference>
<dbReference type="PROSITE" id="PS51257">
    <property type="entry name" value="PROKAR_LIPOPROTEIN"/>
    <property type="match status" value="1"/>
</dbReference>
<dbReference type="PROSITE" id="PS00922">
    <property type="entry name" value="TRANSGLYCOSYLASE"/>
    <property type="match status" value="1"/>
</dbReference>
<keyword id="KW-0998">Cell outer membrane</keyword>
<keyword id="KW-0961">Cell wall biogenesis/degradation</keyword>
<keyword id="KW-0449">Lipoprotein</keyword>
<keyword id="KW-0456">Lyase</keyword>
<keyword id="KW-0472">Membrane</keyword>
<keyword id="KW-0564">Palmitate</keyword>
<keyword id="KW-0732">Signal</keyword>